<keyword id="KW-0963">Cytoplasm</keyword>
<keyword id="KW-0251">Elongation factor</keyword>
<keyword id="KW-0648">Protein biosynthesis</keyword>
<feature type="chain" id="PRO_1000010789" description="Elongation factor P">
    <location>
        <begin position="1"/>
        <end position="187"/>
    </location>
</feature>
<sequence>MASTADFKNGLVLQIDGQLWQIVEFQHVKPGKGPAFVRTKLKNVVSGKVVDKTYNAGVKVETATVDRRDATYLYRDGSDFVFMDSEDYEQHPLPEALVGRAADFLLESMPVQIAFHDGSPLYLELPVTVELVVASTEPGLQGDRSSAGTKPATLETGAEIQVPLFINTGDKLKVDSRDGSYLGRVNA</sequence>
<protein>
    <recommendedName>
        <fullName evidence="1">Elongation factor P</fullName>
        <shortName evidence="1">EF-P</shortName>
    </recommendedName>
</protein>
<comment type="function">
    <text evidence="1">Involved in peptide bond synthesis. Stimulates efficient translation and peptide-bond synthesis on native or reconstituted 70S ribosomes in vitro. Probably functions indirectly by altering the affinity of the ribosome for aminoacyl-tRNA, thus increasing their reactivity as acceptors for peptidyl transferase.</text>
</comment>
<comment type="pathway">
    <text evidence="1">Protein biosynthesis; polypeptide chain elongation.</text>
</comment>
<comment type="subcellular location">
    <subcellularLocation>
        <location evidence="1">Cytoplasm</location>
    </subcellularLocation>
</comment>
<comment type="similarity">
    <text evidence="1">Belongs to the elongation factor P family.</text>
</comment>
<organism>
    <name type="scientific">Mycolicibacterium vanbaalenii (strain DSM 7251 / JCM 13017 / BCRC 16820 / KCTC 9966 / NRRL B-24157 / PYR-1)</name>
    <name type="common">Mycobacterium vanbaalenii</name>
    <dbReference type="NCBI Taxonomy" id="350058"/>
    <lineage>
        <taxon>Bacteria</taxon>
        <taxon>Bacillati</taxon>
        <taxon>Actinomycetota</taxon>
        <taxon>Actinomycetes</taxon>
        <taxon>Mycobacteriales</taxon>
        <taxon>Mycobacteriaceae</taxon>
        <taxon>Mycolicibacterium</taxon>
    </lineage>
</organism>
<dbReference type="EMBL" id="CP000511">
    <property type="protein sequence ID" value="ABM13459.1"/>
    <property type="molecule type" value="Genomic_DNA"/>
</dbReference>
<dbReference type="RefSeq" id="WP_011779868.1">
    <property type="nucleotide sequence ID" value="NZ_JACKSD010000055.1"/>
</dbReference>
<dbReference type="SMR" id="A1T8F9"/>
<dbReference type="STRING" id="350058.Mvan_2651"/>
<dbReference type="KEGG" id="mva:Mvan_2651"/>
<dbReference type="eggNOG" id="COG0231">
    <property type="taxonomic scope" value="Bacteria"/>
</dbReference>
<dbReference type="HOGENOM" id="CLU_074944_0_1_11"/>
<dbReference type="UniPathway" id="UPA00345"/>
<dbReference type="Proteomes" id="UP000009159">
    <property type="component" value="Chromosome"/>
</dbReference>
<dbReference type="GO" id="GO:0005737">
    <property type="term" value="C:cytoplasm"/>
    <property type="evidence" value="ECO:0007669"/>
    <property type="project" value="UniProtKB-SubCell"/>
</dbReference>
<dbReference type="GO" id="GO:0003746">
    <property type="term" value="F:translation elongation factor activity"/>
    <property type="evidence" value="ECO:0007669"/>
    <property type="project" value="UniProtKB-UniRule"/>
</dbReference>
<dbReference type="GO" id="GO:0043043">
    <property type="term" value="P:peptide biosynthetic process"/>
    <property type="evidence" value="ECO:0007669"/>
    <property type="project" value="InterPro"/>
</dbReference>
<dbReference type="CDD" id="cd04470">
    <property type="entry name" value="S1_EF-P_repeat_1"/>
    <property type="match status" value="1"/>
</dbReference>
<dbReference type="CDD" id="cd05794">
    <property type="entry name" value="S1_EF-P_repeat_2"/>
    <property type="match status" value="1"/>
</dbReference>
<dbReference type="FunFam" id="2.30.30.30:FF:000003">
    <property type="entry name" value="Elongation factor P"/>
    <property type="match status" value="1"/>
</dbReference>
<dbReference type="FunFam" id="2.40.50.140:FF:000004">
    <property type="entry name" value="Elongation factor P"/>
    <property type="match status" value="1"/>
</dbReference>
<dbReference type="FunFam" id="2.40.50.140:FF:000009">
    <property type="entry name" value="Elongation factor P"/>
    <property type="match status" value="1"/>
</dbReference>
<dbReference type="Gene3D" id="2.30.30.30">
    <property type="match status" value="1"/>
</dbReference>
<dbReference type="Gene3D" id="2.40.50.140">
    <property type="entry name" value="Nucleic acid-binding proteins"/>
    <property type="match status" value="2"/>
</dbReference>
<dbReference type="HAMAP" id="MF_00141">
    <property type="entry name" value="EF_P"/>
    <property type="match status" value="1"/>
</dbReference>
<dbReference type="InterPro" id="IPR015365">
    <property type="entry name" value="Elong-fact-P_C"/>
</dbReference>
<dbReference type="InterPro" id="IPR012340">
    <property type="entry name" value="NA-bd_OB-fold"/>
</dbReference>
<dbReference type="InterPro" id="IPR014722">
    <property type="entry name" value="Rib_uL2_dom2"/>
</dbReference>
<dbReference type="InterPro" id="IPR020599">
    <property type="entry name" value="Transl_elong_fac_P/YeiP"/>
</dbReference>
<dbReference type="InterPro" id="IPR013185">
    <property type="entry name" value="Transl_elong_KOW-like"/>
</dbReference>
<dbReference type="InterPro" id="IPR001059">
    <property type="entry name" value="Transl_elong_P/YeiP_cen"/>
</dbReference>
<dbReference type="InterPro" id="IPR013852">
    <property type="entry name" value="Transl_elong_P/YeiP_CS"/>
</dbReference>
<dbReference type="InterPro" id="IPR011768">
    <property type="entry name" value="Transl_elongation_fac_P"/>
</dbReference>
<dbReference type="InterPro" id="IPR008991">
    <property type="entry name" value="Translation_prot_SH3-like_sf"/>
</dbReference>
<dbReference type="NCBIfam" id="TIGR00038">
    <property type="entry name" value="efp"/>
    <property type="match status" value="1"/>
</dbReference>
<dbReference type="NCBIfam" id="NF001810">
    <property type="entry name" value="PRK00529.1"/>
    <property type="match status" value="1"/>
</dbReference>
<dbReference type="PANTHER" id="PTHR30053">
    <property type="entry name" value="ELONGATION FACTOR P"/>
    <property type="match status" value="1"/>
</dbReference>
<dbReference type="PANTHER" id="PTHR30053:SF12">
    <property type="entry name" value="ELONGATION FACTOR P (EF-P) FAMILY PROTEIN"/>
    <property type="match status" value="1"/>
</dbReference>
<dbReference type="Pfam" id="PF01132">
    <property type="entry name" value="EFP"/>
    <property type="match status" value="1"/>
</dbReference>
<dbReference type="Pfam" id="PF08207">
    <property type="entry name" value="EFP_N"/>
    <property type="match status" value="1"/>
</dbReference>
<dbReference type="Pfam" id="PF09285">
    <property type="entry name" value="Elong-fact-P_C"/>
    <property type="match status" value="1"/>
</dbReference>
<dbReference type="PIRSF" id="PIRSF005901">
    <property type="entry name" value="EF-P"/>
    <property type="match status" value="1"/>
</dbReference>
<dbReference type="SMART" id="SM01185">
    <property type="entry name" value="EFP"/>
    <property type="match status" value="1"/>
</dbReference>
<dbReference type="SMART" id="SM00841">
    <property type="entry name" value="Elong-fact-P_C"/>
    <property type="match status" value="1"/>
</dbReference>
<dbReference type="SUPFAM" id="SSF50249">
    <property type="entry name" value="Nucleic acid-binding proteins"/>
    <property type="match status" value="2"/>
</dbReference>
<dbReference type="SUPFAM" id="SSF50104">
    <property type="entry name" value="Translation proteins SH3-like domain"/>
    <property type="match status" value="1"/>
</dbReference>
<dbReference type="PROSITE" id="PS01275">
    <property type="entry name" value="EFP"/>
    <property type="match status" value="1"/>
</dbReference>
<reference key="1">
    <citation type="submission" date="2006-12" db="EMBL/GenBank/DDBJ databases">
        <title>Complete sequence of Mycobacterium vanbaalenii PYR-1.</title>
        <authorList>
            <consortium name="US DOE Joint Genome Institute"/>
            <person name="Copeland A."/>
            <person name="Lucas S."/>
            <person name="Lapidus A."/>
            <person name="Barry K."/>
            <person name="Detter J.C."/>
            <person name="Glavina del Rio T."/>
            <person name="Hammon N."/>
            <person name="Israni S."/>
            <person name="Dalin E."/>
            <person name="Tice H."/>
            <person name="Pitluck S."/>
            <person name="Singan V."/>
            <person name="Schmutz J."/>
            <person name="Larimer F."/>
            <person name="Land M."/>
            <person name="Hauser L."/>
            <person name="Kyrpides N."/>
            <person name="Anderson I.J."/>
            <person name="Miller C."/>
            <person name="Richardson P."/>
        </authorList>
    </citation>
    <scope>NUCLEOTIDE SEQUENCE [LARGE SCALE GENOMIC DNA]</scope>
    <source>
        <strain>DSM 7251 / JCM 13017 / BCRC 16820 / KCTC 9966 / NRRL B-24157 / PYR-1</strain>
    </source>
</reference>
<gene>
    <name evidence="1" type="primary">efp</name>
    <name type="ordered locus">Mvan_2651</name>
</gene>
<name>EFP_MYCVP</name>
<proteinExistence type="inferred from homology"/>
<evidence type="ECO:0000255" key="1">
    <source>
        <dbReference type="HAMAP-Rule" id="MF_00141"/>
    </source>
</evidence>
<accession>A1T8F9</accession>